<accession>B7NDT0</accession>
<organism>
    <name type="scientific">Escherichia coli O17:K52:H18 (strain UMN026 / ExPEC)</name>
    <dbReference type="NCBI Taxonomy" id="585056"/>
    <lineage>
        <taxon>Bacteria</taxon>
        <taxon>Pseudomonadati</taxon>
        <taxon>Pseudomonadota</taxon>
        <taxon>Gammaproteobacteria</taxon>
        <taxon>Enterobacterales</taxon>
        <taxon>Enterobacteriaceae</taxon>
        <taxon>Escherichia</taxon>
    </lineage>
</organism>
<keyword id="KW-0687">Ribonucleoprotein</keyword>
<keyword id="KW-0689">Ribosomal protein</keyword>
<keyword id="KW-0694">RNA-binding</keyword>
<keyword id="KW-0699">rRNA-binding</keyword>
<evidence type="ECO:0000255" key="1">
    <source>
        <dbReference type="HAMAP-Rule" id="MF_01326"/>
    </source>
</evidence>
<evidence type="ECO:0000305" key="2"/>
<protein>
    <recommendedName>
        <fullName evidence="1">Large ribosomal subunit protein uL24</fullName>
    </recommendedName>
    <alternativeName>
        <fullName evidence="2">50S ribosomal protein L24</fullName>
    </alternativeName>
</protein>
<reference key="1">
    <citation type="journal article" date="2009" name="PLoS Genet.">
        <title>Organised genome dynamics in the Escherichia coli species results in highly diverse adaptive paths.</title>
        <authorList>
            <person name="Touchon M."/>
            <person name="Hoede C."/>
            <person name="Tenaillon O."/>
            <person name="Barbe V."/>
            <person name="Baeriswyl S."/>
            <person name="Bidet P."/>
            <person name="Bingen E."/>
            <person name="Bonacorsi S."/>
            <person name="Bouchier C."/>
            <person name="Bouvet O."/>
            <person name="Calteau A."/>
            <person name="Chiapello H."/>
            <person name="Clermont O."/>
            <person name="Cruveiller S."/>
            <person name="Danchin A."/>
            <person name="Diard M."/>
            <person name="Dossat C."/>
            <person name="Karoui M.E."/>
            <person name="Frapy E."/>
            <person name="Garry L."/>
            <person name="Ghigo J.M."/>
            <person name="Gilles A.M."/>
            <person name="Johnson J."/>
            <person name="Le Bouguenec C."/>
            <person name="Lescat M."/>
            <person name="Mangenot S."/>
            <person name="Martinez-Jehanne V."/>
            <person name="Matic I."/>
            <person name="Nassif X."/>
            <person name="Oztas S."/>
            <person name="Petit M.A."/>
            <person name="Pichon C."/>
            <person name="Rouy Z."/>
            <person name="Ruf C.S."/>
            <person name="Schneider D."/>
            <person name="Tourret J."/>
            <person name="Vacherie B."/>
            <person name="Vallenet D."/>
            <person name="Medigue C."/>
            <person name="Rocha E.P.C."/>
            <person name="Denamur E."/>
        </authorList>
    </citation>
    <scope>NUCLEOTIDE SEQUENCE [LARGE SCALE GENOMIC DNA]</scope>
    <source>
        <strain>UMN026 / ExPEC</strain>
    </source>
</reference>
<proteinExistence type="inferred from homology"/>
<feature type="chain" id="PRO_1000141994" description="Large ribosomal subunit protein uL24">
    <location>
        <begin position="1"/>
        <end position="104"/>
    </location>
</feature>
<dbReference type="EMBL" id="CU928163">
    <property type="protein sequence ID" value="CAR14930.1"/>
    <property type="molecule type" value="Genomic_DNA"/>
</dbReference>
<dbReference type="RefSeq" id="WP_000729185.1">
    <property type="nucleotide sequence ID" value="NC_011751.1"/>
</dbReference>
<dbReference type="RefSeq" id="YP_002414435.1">
    <property type="nucleotide sequence ID" value="NC_011751.1"/>
</dbReference>
<dbReference type="SMR" id="B7NDT0"/>
<dbReference type="STRING" id="585056.ECUMN_3782"/>
<dbReference type="GeneID" id="93778678"/>
<dbReference type="KEGG" id="eum:ECUMN_3782"/>
<dbReference type="PATRIC" id="fig|585056.7.peg.3957"/>
<dbReference type="HOGENOM" id="CLU_093315_2_2_6"/>
<dbReference type="PRO" id="PR:B7NDT0"/>
<dbReference type="Proteomes" id="UP000007097">
    <property type="component" value="Chromosome"/>
</dbReference>
<dbReference type="GO" id="GO:0005829">
    <property type="term" value="C:cytosol"/>
    <property type="evidence" value="ECO:0007669"/>
    <property type="project" value="UniProtKB-ARBA"/>
</dbReference>
<dbReference type="GO" id="GO:1990904">
    <property type="term" value="C:ribonucleoprotein complex"/>
    <property type="evidence" value="ECO:0007669"/>
    <property type="project" value="UniProtKB-KW"/>
</dbReference>
<dbReference type="GO" id="GO:0005840">
    <property type="term" value="C:ribosome"/>
    <property type="evidence" value="ECO:0007669"/>
    <property type="project" value="UniProtKB-KW"/>
</dbReference>
<dbReference type="GO" id="GO:0019843">
    <property type="term" value="F:rRNA binding"/>
    <property type="evidence" value="ECO:0007669"/>
    <property type="project" value="UniProtKB-UniRule"/>
</dbReference>
<dbReference type="GO" id="GO:0003735">
    <property type="term" value="F:structural constituent of ribosome"/>
    <property type="evidence" value="ECO:0007669"/>
    <property type="project" value="InterPro"/>
</dbReference>
<dbReference type="GO" id="GO:0006412">
    <property type="term" value="P:translation"/>
    <property type="evidence" value="ECO:0007669"/>
    <property type="project" value="UniProtKB-UniRule"/>
</dbReference>
<dbReference type="CDD" id="cd06089">
    <property type="entry name" value="KOW_RPL26"/>
    <property type="match status" value="1"/>
</dbReference>
<dbReference type="FunFam" id="2.30.30.30:FF:000004">
    <property type="entry name" value="50S ribosomal protein L24"/>
    <property type="match status" value="1"/>
</dbReference>
<dbReference type="Gene3D" id="2.30.30.30">
    <property type="match status" value="1"/>
</dbReference>
<dbReference type="HAMAP" id="MF_01326_B">
    <property type="entry name" value="Ribosomal_uL24_B"/>
    <property type="match status" value="1"/>
</dbReference>
<dbReference type="InterPro" id="IPR005824">
    <property type="entry name" value="KOW"/>
</dbReference>
<dbReference type="InterPro" id="IPR014722">
    <property type="entry name" value="Rib_uL2_dom2"/>
</dbReference>
<dbReference type="InterPro" id="IPR003256">
    <property type="entry name" value="Ribosomal_uL24"/>
</dbReference>
<dbReference type="InterPro" id="IPR005825">
    <property type="entry name" value="Ribosomal_uL24_CS"/>
</dbReference>
<dbReference type="InterPro" id="IPR041988">
    <property type="entry name" value="Ribosomal_uL24_KOW"/>
</dbReference>
<dbReference type="InterPro" id="IPR008991">
    <property type="entry name" value="Translation_prot_SH3-like_sf"/>
</dbReference>
<dbReference type="NCBIfam" id="TIGR01079">
    <property type="entry name" value="rplX_bact"/>
    <property type="match status" value="1"/>
</dbReference>
<dbReference type="PANTHER" id="PTHR12903">
    <property type="entry name" value="MITOCHONDRIAL RIBOSOMAL PROTEIN L24"/>
    <property type="match status" value="1"/>
</dbReference>
<dbReference type="Pfam" id="PF00467">
    <property type="entry name" value="KOW"/>
    <property type="match status" value="1"/>
</dbReference>
<dbReference type="Pfam" id="PF17136">
    <property type="entry name" value="ribosomal_L24"/>
    <property type="match status" value="1"/>
</dbReference>
<dbReference type="SMART" id="SM00739">
    <property type="entry name" value="KOW"/>
    <property type="match status" value="1"/>
</dbReference>
<dbReference type="SUPFAM" id="SSF50104">
    <property type="entry name" value="Translation proteins SH3-like domain"/>
    <property type="match status" value="1"/>
</dbReference>
<dbReference type="PROSITE" id="PS01108">
    <property type="entry name" value="RIBOSOMAL_L24"/>
    <property type="match status" value="1"/>
</dbReference>
<sequence length="104" mass="11316">MAAKIRRDDEVIVLTGKDKGKRGKVKNVLSSGKVIVEGINLVKKHQKPVPALNQPGGIVEKEAAIQVSNVAIFNAATGKADRVGFRFEDGKKVRFFKSNSETIK</sequence>
<name>RL24_ECOLU</name>
<gene>
    <name evidence="1" type="primary">rplX</name>
    <name type="ordered locus">ECUMN_3782</name>
</gene>
<comment type="function">
    <text evidence="1">One of two assembly initiator proteins, it binds directly to the 5'-end of the 23S rRNA, where it nucleates assembly of the 50S subunit.</text>
</comment>
<comment type="function">
    <text evidence="1">One of the proteins that surrounds the polypeptide exit tunnel on the outside of the subunit.</text>
</comment>
<comment type="subunit">
    <text evidence="1">Part of the 50S ribosomal subunit.</text>
</comment>
<comment type="similarity">
    <text evidence="1">Belongs to the universal ribosomal protein uL24 family.</text>
</comment>